<protein>
    <recommendedName>
        <fullName evidence="1">Chromosomal replication initiator protein DnaA</fullName>
    </recommendedName>
</protein>
<reference key="1">
    <citation type="submission" date="2006-03" db="EMBL/GenBank/DDBJ databases">
        <title>Complete sequence of Methylobacillus flagellatus KT.</title>
        <authorList>
            <consortium name="US DOE Joint Genome Institute"/>
            <person name="Copeland A."/>
            <person name="Lucas S."/>
            <person name="Lapidus A."/>
            <person name="Barry K."/>
            <person name="Detter J.C."/>
            <person name="Glavina del Rio T."/>
            <person name="Hammon N."/>
            <person name="Israni S."/>
            <person name="Dalin E."/>
            <person name="Tice H."/>
            <person name="Pitluck S."/>
            <person name="Brettin T."/>
            <person name="Bruce D."/>
            <person name="Han C."/>
            <person name="Tapia R."/>
            <person name="Saunders E."/>
            <person name="Gilna P."/>
            <person name="Schmutz J."/>
            <person name="Larimer F."/>
            <person name="Land M."/>
            <person name="Kyrpides N."/>
            <person name="Anderson I."/>
            <person name="Richardson P."/>
        </authorList>
    </citation>
    <scope>NUCLEOTIDE SEQUENCE [LARGE SCALE GENOMIC DNA]</scope>
    <source>
        <strain>ATCC 51484 / DSM 6875 / VKM B-1610 / KT</strain>
    </source>
</reference>
<dbReference type="EMBL" id="CP000284">
    <property type="protein sequence ID" value="ABE48272.1"/>
    <property type="molecule type" value="Genomic_DNA"/>
</dbReference>
<dbReference type="RefSeq" id="WP_011478369.1">
    <property type="nucleotide sequence ID" value="NC_007947.1"/>
</dbReference>
<dbReference type="SMR" id="Q1GXK1"/>
<dbReference type="STRING" id="265072.Mfla_0001"/>
<dbReference type="KEGG" id="mfa:Mfla_0001"/>
<dbReference type="eggNOG" id="COG0593">
    <property type="taxonomic scope" value="Bacteria"/>
</dbReference>
<dbReference type="HOGENOM" id="CLU_026910_0_1_4"/>
<dbReference type="OrthoDB" id="9807019at2"/>
<dbReference type="Proteomes" id="UP000002440">
    <property type="component" value="Chromosome"/>
</dbReference>
<dbReference type="GO" id="GO:0005737">
    <property type="term" value="C:cytoplasm"/>
    <property type="evidence" value="ECO:0007669"/>
    <property type="project" value="UniProtKB-SubCell"/>
</dbReference>
<dbReference type="GO" id="GO:0005886">
    <property type="term" value="C:plasma membrane"/>
    <property type="evidence" value="ECO:0007669"/>
    <property type="project" value="TreeGrafter"/>
</dbReference>
<dbReference type="GO" id="GO:0005524">
    <property type="term" value="F:ATP binding"/>
    <property type="evidence" value="ECO:0007669"/>
    <property type="project" value="UniProtKB-UniRule"/>
</dbReference>
<dbReference type="GO" id="GO:0016887">
    <property type="term" value="F:ATP hydrolysis activity"/>
    <property type="evidence" value="ECO:0007669"/>
    <property type="project" value="InterPro"/>
</dbReference>
<dbReference type="GO" id="GO:0003688">
    <property type="term" value="F:DNA replication origin binding"/>
    <property type="evidence" value="ECO:0007669"/>
    <property type="project" value="UniProtKB-UniRule"/>
</dbReference>
<dbReference type="GO" id="GO:0008289">
    <property type="term" value="F:lipid binding"/>
    <property type="evidence" value="ECO:0007669"/>
    <property type="project" value="UniProtKB-KW"/>
</dbReference>
<dbReference type="GO" id="GO:0006270">
    <property type="term" value="P:DNA replication initiation"/>
    <property type="evidence" value="ECO:0007669"/>
    <property type="project" value="UniProtKB-UniRule"/>
</dbReference>
<dbReference type="GO" id="GO:0006275">
    <property type="term" value="P:regulation of DNA replication"/>
    <property type="evidence" value="ECO:0007669"/>
    <property type="project" value="UniProtKB-UniRule"/>
</dbReference>
<dbReference type="CDD" id="cd00009">
    <property type="entry name" value="AAA"/>
    <property type="match status" value="1"/>
</dbReference>
<dbReference type="CDD" id="cd06571">
    <property type="entry name" value="Bac_DnaA_C"/>
    <property type="match status" value="1"/>
</dbReference>
<dbReference type="FunFam" id="1.10.8.60:FF:000003">
    <property type="entry name" value="Chromosomal replication initiator protein DnaA"/>
    <property type="match status" value="1"/>
</dbReference>
<dbReference type="FunFam" id="3.40.50.300:FF:000668">
    <property type="entry name" value="Chromosomal replication initiator protein DnaA"/>
    <property type="match status" value="1"/>
</dbReference>
<dbReference type="Gene3D" id="1.10.1750.10">
    <property type="match status" value="1"/>
</dbReference>
<dbReference type="Gene3D" id="1.10.8.60">
    <property type="match status" value="1"/>
</dbReference>
<dbReference type="Gene3D" id="3.30.300.180">
    <property type="match status" value="1"/>
</dbReference>
<dbReference type="Gene3D" id="3.40.50.300">
    <property type="entry name" value="P-loop containing nucleotide triphosphate hydrolases"/>
    <property type="match status" value="1"/>
</dbReference>
<dbReference type="HAMAP" id="MF_00377">
    <property type="entry name" value="DnaA_bact"/>
    <property type="match status" value="1"/>
</dbReference>
<dbReference type="InterPro" id="IPR003593">
    <property type="entry name" value="AAA+_ATPase"/>
</dbReference>
<dbReference type="InterPro" id="IPR001957">
    <property type="entry name" value="Chromosome_initiator_DnaA"/>
</dbReference>
<dbReference type="InterPro" id="IPR020591">
    <property type="entry name" value="Chromosome_initiator_DnaA-like"/>
</dbReference>
<dbReference type="InterPro" id="IPR018312">
    <property type="entry name" value="Chromosome_initiator_DnaA_CS"/>
</dbReference>
<dbReference type="InterPro" id="IPR013159">
    <property type="entry name" value="DnaA_C"/>
</dbReference>
<dbReference type="InterPro" id="IPR013317">
    <property type="entry name" value="DnaA_dom"/>
</dbReference>
<dbReference type="InterPro" id="IPR024633">
    <property type="entry name" value="DnaA_N_dom"/>
</dbReference>
<dbReference type="InterPro" id="IPR038454">
    <property type="entry name" value="DnaA_N_sf"/>
</dbReference>
<dbReference type="InterPro" id="IPR027417">
    <property type="entry name" value="P-loop_NTPase"/>
</dbReference>
<dbReference type="InterPro" id="IPR010921">
    <property type="entry name" value="Trp_repressor/repl_initiator"/>
</dbReference>
<dbReference type="NCBIfam" id="TIGR00362">
    <property type="entry name" value="DnaA"/>
    <property type="match status" value="1"/>
</dbReference>
<dbReference type="PANTHER" id="PTHR30050">
    <property type="entry name" value="CHROMOSOMAL REPLICATION INITIATOR PROTEIN DNAA"/>
    <property type="match status" value="1"/>
</dbReference>
<dbReference type="PANTHER" id="PTHR30050:SF2">
    <property type="entry name" value="CHROMOSOMAL REPLICATION INITIATOR PROTEIN DNAA"/>
    <property type="match status" value="1"/>
</dbReference>
<dbReference type="Pfam" id="PF00308">
    <property type="entry name" value="Bac_DnaA"/>
    <property type="match status" value="1"/>
</dbReference>
<dbReference type="Pfam" id="PF08299">
    <property type="entry name" value="Bac_DnaA_C"/>
    <property type="match status" value="1"/>
</dbReference>
<dbReference type="Pfam" id="PF11638">
    <property type="entry name" value="DnaA_N"/>
    <property type="match status" value="1"/>
</dbReference>
<dbReference type="PRINTS" id="PR00051">
    <property type="entry name" value="DNAA"/>
</dbReference>
<dbReference type="SMART" id="SM00382">
    <property type="entry name" value="AAA"/>
    <property type="match status" value="1"/>
</dbReference>
<dbReference type="SMART" id="SM00760">
    <property type="entry name" value="Bac_DnaA_C"/>
    <property type="match status" value="1"/>
</dbReference>
<dbReference type="SUPFAM" id="SSF52540">
    <property type="entry name" value="P-loop containing nucleoside triphosphate hydrolases"/>
    <property type="match status" value="1"/>
</dbReference>
<dbReference type="SUPFAM" id="SSF48295">
    <property type="entry name" value="TrpR-like"/>
    <property type="match status" value="1"/>
</dbReference>
<dbReference type="PROSITE" id="PS01008">
    <property type="entry name" value="DNAA"/>
    <property type="match status" value="1"/>
</dbReference>
<sequence>MENFWSLCLGRFEEELSAQQFNTWIKPLRFEAREGTLRLLAPNRFVQQWVKDRFLQKISALAEEVLSTPVQIELALYDASEKSPITLAKPKPAEAPGAAAKIEAEISKVTKTVSPAKPASAAPKKPKTLTETSGLNPAFRFDNFVTGKANQLARAAAIQVAENPGTAYNPLFIYGGVGLGKTHVLQAIGNHLKSQRPDAKIRYLHAERYVSDVVKAYEHKAFDEFKRQYHSLDLLLIDDIQFFAKKSRTQEEFFYAFNSLIEAKKQIIITCDTYPKEIADVDERLRTRFSWGLTVAVEPPELEMRVAILLKKAEAARVTLDEDVAFFIAKQVRSSVRELEGALNRIIAMANFTGHAIDVSLAKEALKDLIAVRGRQITIENIQKTVADYYKIKVAEMYSKKRSRNFARPRQIAMTLARELTNHSFPEIGEAFGGRHHTTVMHACDEIEQLRQNDQNVARDIAVLIQVIRD</sequence>
<evidence type="ECO:0000255" key="1">
    <source>
        <dbReference type="HAMAP-Rule" id="MF_00377"/>
    </source>
</evidence>
<comment type="function">
    <text evidence="1">Plays an essential role in the initiation and regulation of chromosomal replication. ATP-DnaA binds to the origin of replication (oriC) to initiate formation of the DNA replication initiation complex once per cell cycle. Binds the DnaA box (a 9 base pair repeat at the origin) and separates the double-stranded (ds)DNA. Forms a right-handed helical filament on oriC DNA; dsDNA binds to the exterior of the filament while single-stranded (ss)DNA is stabiized in the filament's interior. The ATP-DnaA-oriC complex binds and stabilizes one strand of the AT-rich DNA unwinding element (DUE), permitting loading of DNA polymerase. After initiation quickly degrades to an ADP-DnaA complex that is not apt for DNA replication. Binds acidic phospholipids.</text>
</comment>
<comment type="subunit">
    <text evidence="1">Oligomerizes as a right-handed, spiral filament on DNA at oriC.</text>
</comment>
<comment type="subcellular location">
    <subcellularLocation>
        <location evidence="1">Cytoplasm</location>
    </subcellularLocation>
</comment>
<comment type="domain">
    <text evidence="1">Domain I is involved in oligomerization and binding regulators, domain II is flexibile and of varying length in different bacteria, domain III forms the AAA+ region, while domain IV binds dsDNA.</text>
</comment>
<comment type="similarity">
    <text evidence="1">Belongs to the DnaA family.</text>
</comment>
<keyword id="KW-0067">ATP-binding</keyword>
<keyword id="KW-0963">Cytoplasm</keyword>
<keyword id="KW-0235">DNA replication</keyword>
<keyword id="KW-0238">DNA-binding</keyword>
<keyword id="KW-0446">Lipid-binding</keyword>
<keyword id="KW-0547">Nucleotide-binding</keyword>
<keyword id="KW-1185">Reference proteome</keyword>
<name>DNAA_METFK</name>
<feature type="chain" id="PRO_1000048670" description="Chromosomal replication initiator protein DnaA">
    <location>
        <begin position="1"/>
        <end position="470"/>
    </location>
</feature>
<feature type="region of interest" description="Domain I, interacts with DnaA modulators" evidence="1">
    <location>
        <begin position="1"/>
        <end position="68"/>
    </location>
</feature>
<feature type="region of interest" description="Domain II" evidence="1">
    <location>
        <begin position="68"/>
        <end position="133"/>
    </location>
</feature>
<feature type="region of interest" description="Domain III, AAA+ region" evidence="1">
    <location>
        <begin position="134"/>
        <end position="350"/>
    </location>
</feature>
<feature type="region of interest" description="Domain IV, binds dsDNA" evidence="1">
    <location>
        <begin position="351"/>
        <end position="470"/>
    </location>
</feature>
<feature type="binding site" evidence="1">
    <location>
        <position position="178"/>
    </location>
    <ligand>
        <name>ATP</name>
        <dbReference type="ChEBI" id="CHEBI:30616"/>
    </ligand>
</feature>
<feature type="binding site" evidence="1">
    <location>
        <position position="180"/>
    </location>
    <ligand>
        <name>ATP</name>
        <dbReference type="ChEBI" id="CHEBI:30616"/>
    </ligand>
</feature>
<feature type="binding site" evidence="1">
    <location>
        <position position="181"/>
    </location>
    <ligand>
        <name>ATP</name>
        <dbReference type="ChEBI" id="CHEBI:30616"/>
    </ligand>
</feature>
<feature type="binding site" evidence="1">
    <location>
        <position position="182"/>
    </location>
    <ligand>
        <name>ATP</name>
        <dbReference type="ChEBI" id="CHEBI:30616"/>
    </ligand>
</feature>
<proteinExistence type="inferred from homology"/>
<organism>
    <name type="scientific">Methylobacillus flagellatus (strain ATCC 51484 / DSM 6875 / VKM B-1610 / KT)</name>
    <dbReference type="NCBI Taxonomy" id="265072"/>
    <lineage>
        <taxon>Bacteria</taxon>
        <taxon>Pseudomonadati</taxon>
        <taxon>Pseudomonadota</taxon>
        <taxon>Betaproteobacteria</taxon>
        <taxon>Nitrosomonadales</taxon>
        <taxon>Methylophilaceae</taxon>
        <taxon>Methylobacillus</taxon>
    </lineage>
</organism>
<gene>
    <name evidence="1" type="primary">dnaA</name>
    <name type="ordered locus">Mfla_0001</name>
</gene>
<accession>Q1GXK1</accession>